<dbReference type="EC" id="2.7.4.6" evidence="1"/>
<dbReference type="EMBL" id="CP000804">
    <property type="protein sequence ID" value="ABU56173.1"/>
    <property type="molecule type" value="Genomic_DNA"/>
</dbReference>
<dbReference type="RefSeq" id="WP_011997578.1">
    <property type="nucleotide sequence ID" value="NC_009767.1"/>
</dbReference>
<dbReference type="SMR" id="A7NFF1"/>
<dbReference type="STRING" id="383372.Rcas_0034"/>
<dbReference type="KEGG" id="rca:Rcas_0034"/>
<dbReference type="eggNOG" id="COG0105">
    <property type="taxonomic scope" value="Bacteria"/>
</dbReference>
<dbReference type="HOGENOM" id="CLU_060216_6_3_0"/>
<dbReference type="OrthoDB" id="9801161at2"/>
<dbReference type="Proteomes" id="UP000000263">
    <property type="component" value="Chromosome"/>
</dbReference>
<dbReference type="GO" id="GO:0005737">
    <property type="term" value="C:cytoplasm"/>
    <property type="evidence" value="ECO:0007669"/>
    <property type="project" value="UniProtKB-SubCell"/>
</dbReference>
<dbReference type="GO" id="GO:0005524">
    <property type="term" value="F:ATP binding"/>
    <property type="evidence" value="ECO:0007669"/>
    <property type="project" value="UniProtKB-UniRule"/>
</dbReference>
<dbReference type="GO" id="GO:0046872">
    <property type="term" value="F:metal ion binding"/>
    <property type="evidence" value="ECO:0007669"/>
    <property type="project" value="UniProtKB-KW"/>
</dbReference>
<dbReference type="GO" id="GO:0004550">
    <property type="term" value="F:nucleoside diphosphate kinase activity"/>
    <property type="evidence" value="ECO:0007669"/>
    <property type="project" value="UniProtKB-UniRule"/>
</dbReference>
<dbReference type="GO" id="GO:0006241">
    <property type="term" value="P:CTP biosynthetic process"/>
    <property type="evidence" value="ECO:0007669"/>
    <property type="project" value="UniProtKB-UniRule"/>
</dbReference>
<dbReference type="GO" id="GO:0006183">
    <property type="term" value="P:GTP biosynthetic process"/>
    <property type="evidence" value="ECO:0007669"/>
    <property type="project" value="UniProtKB-UniRule"/>
</dbReference>
<dbReference type="GO" id="GO:0006228">
    <property type="term" value="P:UTP biosynthetic process"/>
    <property type="evidence" value="ECO:0007669"/>
    <property type="project" value="UniProtKB-UniRule"/>
</dbReference>
<dbReference type="CDD" id="cd04413">
    <property type="entry name" value="NDPk_I"/>
    <property type="match status" value="1"/>
</dbReference>
<dbReference type="FunFam" id="3.30.70.141:FF:000003">
    <property type="entry name" value="Nucleoside diphosphate kinase"/>
    <property type="match status" value="1"/>
</dbReference>
<dbReference type="Gene3D" id="3.30.70.141">
    <property type="entry name" value="Nucleoside diphosphate kinase-like domain"/>
    <property type="match status" value="1"/>
</dbReference>
<dbReference type="HAMAP" id="MF_00451">
    <property type="entry name" value="NDP_kinase"/>
    <property type="match status" value="1"/>
</dbReference>
<dbReference type="InterPro" id="IPR034907">
    <property type="entry name" value="NDK-like_dom"/>
</dbReference>
<dbReference type="InterPro" id="IPR036850">
    <property type="entry name" value="NDK-like_dom_sf"/>
</dbReference>
<dbReference type="InterPro" id="IPR001564">
    <property type="entry name" value="Nucleoside_diP_kinase"/>
</dbReference>
<dbReference type="InterPro" id="IPR023005">
    <property type="entry name" value="Nucleoside_diP_kinase_AS"/>
</dbReference>
<dbReference type="NCBIfam" id="NF001908">
    <property type="entry name" value="PRK00668.1"/>
    <property type="match status" value="1"/>
</dbReference>
<dbReference type="PANTHER" id="PTHR11349">
    <property type="entry name" value="NUCLEOSIDE DIPHOSPHATE KINASE"/>
    <property type="match status" value="1"/>
</dbReference>
<dbReference type="Pfam" id="PF00334">
    <property type="entry name" value="NDK"/>
    <property type="match status" value="1"/>
</dbReference>
<dbReference type="PRINTS" id="PR01243">
    <property type="entry name" value="NUCDPKINASE"/>
</dbReference>
<dbReference type="SMART" id="SM00562">
    <property type="entry name" value="NDK"/>
    <property type="match status" value="1"/>
</dbReference>
<dbReference type="SUPFAM" id="SSF54919">
    <property type="entry name" value="Nucleoside diphosphate kinase, NDK"/>
    <property type="match status" value="1"/>
</dbReference>
<dbReference type="PROSITE" id="PS00469">
    <property type="entry name" value="NDPK"/>
    <property type="match status" value="1"/>
</dbReference>
<dbReference type="PROSITE" id="PS51374">
    <property type="entry name" value="NDPK_LIKE"/>
    <property type="match status" value="1"/>
</dbReference>
<gene>
    <name evidence="1" type="primary">ndk</name>
    <name type="ordered locus">Rcas_0034</name>
</gene>
<name>NDK_ROSCS</name>
<proteinExistence type="inferred from homology"/>
<comment type="function">
    <text evidence="1">Major role in the synthesis of nucleoside triphosphates other than ATP. The ATP gamma phosphate is transferred to the NDP beta phosphate via a ping-pong mechanism, using a phosphorylated active-site intermediate.</text>
</comment>
<comment type="catalytic activity">
    <reaction evidence="1">
        <text>a 2'-deoxyribonucleoside 5'-diphosphate + ATP = a 2'-deoxyribonucleoside 5'-triphosphate + ADP</text>
        <dbReference type="Rhea" id="RHEA:44640"/>
        <dbReference type="ChEBI" id="CHEBI:30616"/>
        <dbReference type="ChEBI" id="CHEBI:61560"/>
        <dbReference type="ChEBI" id="CHEBI:73316"/>
        <dbReference type="ChEBI" id="CHEBI:456216"/>
        <dbReference type="EC" id="2.7.4.6"/>
    </reaction>
</comment>
<comment type="catalytic activity">
    <reaction evidence="1">
        <text>a ribonucleoside 5'-diphosphate + ATP = a ribonucleoside 5'-triphosphate + ADP</text>
        <dbReference type="Rhea" id="RHEA:18113"/>
        <dbReference type="ChEBI" id="CHEBI:30616"/>
        <dbReference type="ChEBI" id="CHEBI:57930"/>
        <dbReference type="ChEBI" id="CHEBI:61557"/>
        <dbReference type="ChEBI" id="CHEBI:456216"/>
        <dbReference type="EC" id="2.7.4.6"/>
    </reaction>
</comment>
<comment type="cofactor">
    <cofactor evidence="1">
        <name>Mg(2+)</name>
        <dbReference type="ChEBI" id="CHEBI:18420"/>
    </cofactor>
</comment>
<comment type="subunit">
    <text evidence="1">Homotetramer.</text>
</comment>
<comment type="subcellular location">
    <subcellularLocation>
        <location evidence="1">Cytoplasm</location>
    </subcellularLocation>
</comment>
<comment type="similarity">
    <text evidence="1">Belongs to the NDK family.</text>
</comment>
<feature type="chain" id="PRO_1000080975" description="Nucleoside diphosphate kinase">
    <location>
        <begin position="1"/>
        <end position="149"/>
    </location>
</feature>
<feature type="active site" description="Pros-phosphohistidine intermediate" evidence="1">
    <location>
        <position position="115"/>
    </location>
</feature>
<feature type="binding site" evidence="1">
    <location>
        <position position="9"/>
    </location>
    <ligand>
        <name>ATP</name>
        <dbReference type="ChEBI" id="CHEBI:30616"/>
    </ligand>
</feature>
<feature type="binding site" evidence="1">
    <location>
        <position position="57"/>
    </location>
    <ligand>
        <name>ATP</name>
        <dbReference type="ChEBI" id="CHEBI:30616"/>
    </ligand>
</feature>
<feature type="binding site" evidence="1">
    <location>
        <position position="85"/>
    </location>
    <ligand>
        <name>ATP</name>
        <dbReference type="ChEBI" id="CHEBI:30616"/>
    </ligand>
</feature>
<feature type="binding site" evidence="1">
    <location>
        <position position="91"/>
    </location>
    <ligand>
        <name>ATP</name>
        <dbReference type="ChEBI" id="CHEBI:30616"/>
    </ligand>
</feature>
<feature type="binding site" evidence="1">
    <location>
        <position position="102"/>
    </location>
    <ligand>
        <name>ATP</name>
        <dbReference type="ChEBI" id="CHEBI:30616"/>
    </ligand>
</feature>
<feature type="binding site" evidence="1">
    <location>
        <position position="112"/>
    </location>
    <ligand>
        <name>ATP</name>
        <dbReference type="ChEBI" id="CHEBI:30616"/>
    </ligand>
</feature>
<protein>
    <recommendedName>
        <fullName evidence="1">Nucleoside diphosphate kinase</fullName>
        <shortName evidence="1">NDK</shortName>
        <shortName evidence="1">NDP kinase</shortName>
        <ecNumber evidence="1">2.7.4.6</ecNumber>
    </recommendedName>
    <alternativeName>
        <fullName evidence="1">Nucleoside-2-P kinase</fullName>
    </alternativeName>
</protein>
<reference key="1">
    <citation type="submission" date="2007-08" db="EMBL/GenBank/DDBJ databases">
        <title>Complete sequence of Roseiflexus castenholzii DSM 13941.</title>
        <authorList>
            <consortium name="US DOE Joint Genome Institute"/>
            <person name="Copeland A."/>
            <person name="Lucas S."/>
            <person name="Lapidus A."/>
            <person name="Barry K."/>
            <person name="Glavina del Rio T."/>
            <person name="Dalin E."/>
            <person name="Tice H."/>
            <person name="Pitluck S."/>
            <person name="Thompson L.S."/>
            <person name="Brettin T."/>
            <person name="Bruce D."/>
            <person name="Detter J.C."/>
            <person name="Han C."/>
            <person name="Tapia R."/>
            <person name="Schmutz J."/>
            <person name="Larimer F."/>
            <person name="Land M."/>
            <person name="Hauser L."/>
            <person name="Kyrpides N."/>
            <person name="Mikhailova N."/>
            <person name="Bryant D.A."/>
            <person name="Hanada S."/>
            <person name="Tsukatani Y."/>
            <person name="Richardson P."/>
        </authorList>
    </citation>
    <scope>NUCLEOTIDE SEQUENCE [LARGE SCALE GENOMIC DNA]</scope>
    <source>
        <strain>DSM 13941 / HLO8</strain>
    </source>
</reference>
<accession>A7NFF1</accession>
<organism>
    <name type="scientific">Roseiflexus castenholzii (strain DSM 13941 / HLO8)</name>
    <dbReference type="NCBI Taxonomy" id="383372"/>
    <lineage>
        <taxon>Bacteria</taxon>
        <taxon>Bacillati</taxon>
        <taxon>Chloroflexota</taxon>
        <taxon>Chloroflexia</taxon>
        <taxon>Chloroflexales</taxon>
        <taxon>Roseiflexineae</taxon>
        <taxon>Roseiflexaceae</taxon>
        <taxon>Roseiflexus</taxon>
    </lineage>
</organism>
<evidence type="ECO:0000255" key="1">
    <source>
        <dbReference type="HAMAP-Rule" id="MF_00451"/>
    </source>
</evidence>
<sequence>MERSLIILKPDAVQRGLIGPILTRIEQRGLRIVGLKLMQIDEALARRHYAIHEGKPFFDSLIAYITSGPVVVLVVTGANVIEMVRSMVGATNPGKAAPGTIRGDFALEIGRNLIHASDSPENGEMEVNLFFRAEELVDMRRSTDQWIYE</sequence>
<keyword id="KW-0067">ATP-binding</keyword>
<keyword id="KW-0963">Cytoplasm</keyword>
<keyword id="KW-0418">Kinase</keyword>
<keyword id="KW-0460">Magnesium</keyword>
<keyword id="KW-0479">Metal-binding</keyword>
<keyword id="KW-0546">Nucleotide metabolism</keyword>
<keyword id="KW-0547">Nucleotide-binding</keyword>
<keyword id="KW-0597">Phosphoprotein</keyword>
<keyword id="KW-1185">Reference proteome</keyword>
<keyword id="KW-0808">Transferase</keyword>